<accession>Q6ENR3</accession>
<comment type="subcellular location">
    <subcellularLocation>
        <location>Plastid</location>
        <location>Chloroplast</location>
    </subcellularLocation>
</comment>
<comment type="similarity">
    <text evidence="1">Belongs to the ycf15 family.</text>
</comment>
<comment type="caution">
    <text evidence="1">Could be the product of a pseudogene.</text>
</comment>
<gene>
    <name type="primary">ycf15-A</name>
</gene>
<gene>
    <name type="primary">ycf15-B</name>
</gene>
<sequence>MLIVLFRSKDIRGGRFVRPILIFRTKRSWILFRIGPERRREAEMPTDLCLFSNSPDPIVPVFGTSSAKVTEWVSHQSNPFDKSGVILDIIFYIYRNIIE</sequence>
<name>YCF15_SACOF</name>
<organism>
    <name type="scientific">Saccharum officinarum</name>
    <name type="common">Sugarcane</name>
    <dbReference type="NCBI Taxonomy" id="4547"/>
    <lineage>
        <taxon>Eukaryota</taxon>
        <taxon>Viridiplantae</taxon>
        <taxon>Streptophyta</taxon>
        <taxon>Embryophyta</taxon>
        <taxon>Tracheophyta</taxon>
        <taxon>Spermatophyta</taxon>
        <taxon>Magnoliopsida</taxon>
        <taxon>Liliopsida</taxon>
        <taxon>Poales</taxon>
        <taxon>Poaceae</taxon>
        <taxon>PACMAD clade</taxon>
        <taxon>Panicoideae</taxon>
        <taxon>Andropogonodae</taxon>
        <taxon>Andropogoneae</taxon>
        <taxon>Saccharinae</taxon>
        <taxon>Saccharum</taxon>
        <taxon>Saccharum officinarum species complex</taxon>
    </lineage>
</organism>
<reference key="1">
    <citation type="journal article" date="2004" name="DNA Res.">
        <title>Complete nucleotide sequence of the sugarcane (Saccharum officinarum) chloroplast genome: a comparative analysis of four monocot chloroplast genomes.</title>
        <authorList>
            <person name="Asano T."/>
            <person name="Tsudzuki T."/>
            <person name="Takahashi S."/>
            <person name="Shimada H."/>
            <person name="Kadowaki K."/>
        </authorList>
    </citation>
    <scope>NUCLEOTIDE SEQUENCE [LARGE SCALE GENOMIC DNA]</scope>
</reference>
<protein>
    <recommendedName>
        <fullName>Putative uncharacterized protein ycf15</fullName>
    </recommendedName>
    <alternativeName>
        <fullName>ORF99</fullName>
    </alternativeName>
</protein>
<geneLocation type="chloroplast"/>
<keyword id="KW-0150">Chloroplast</keyword>
<keyword id="KW-0934">Plastid</keyword>
<proteinExistence type="uncertain"/>
<feature type="chain" id="PRO_0000299590" description="Putative uncharacterized protein ycf15">
    <location>
        <begin position="1"/>
        <end position="99"/>
    </location>
</feature>
<dbReference type="EMBL" id="AP006714">
    <property type="protein sequence ID" value="BAD27343.1"/>
    <property type="molecule type" value="Genomic_DNA"/>
</dbReference>
<dbReference type="EMBL" id="AP006714">
    <property type="protein sequence ID" value="BAD27377.1"/>
    <property type="molecule type" value="Genomic_DNA"/>
</dbReference>
<dbReference type="GO" id="GO:0009507">
    <property type="term" value="C:chloroplast"/>
    <property type="evidence" value="ECO:0007669"/>
    <property type="project" value="UniProtKB-SubCell"/>
</dbReference>
<dbReference type="InterPro" id="IPR019645">
    <property type="entry name" value="Uncharacterised_Ycf15"/>
</dbReference>
<dbReference type="Pfam" id="PF10705">
    <property type="entry name" value="Ycf15"/>
    <property type="match status" value="1"/>
</dbReference>
<evidence type="ECO:0000305" key="1"/>